<name>SYH_LACCB</name>
<sequence length="427" mass="47565">MNYQRPKGTADILPGQSERWQQVEAVARKIFAQYQYHEIRTPIFENVDVFSRSAGDTSDIVTKEMYTFKDKGDRMMALRPEGTAGVVRAYVENKLYGPEHAKPYKVYYLGPMFRYERPQSGRQRQFHQIGVEAFGSDSPVLDAETLALAKQLLEALGAKHLKFVINSLGDPATRKAFHAALVDYLTPFKDQLSEDSKVRLVKNPLRILDSKDKHDQEIVANAPSILDYLTPEAQQHFDRVKTLLQGLGIPFEVDATMVRGLDYYNHTIFEVMSDDKVFGGGYTTILAGGRYNGLVEELGGPETPGIGFAMGVERLMLLMQGELPTAQPDAYIVTIDQGADQEALQMLTAIRQQGFTGEMDYMGRKPKGQFKAANKANAKLVLTIGESERAAGTVQIKNMATGDQQAFPQADVLADFGKIYTQVMEAK</sequence>
<gene>
    <name evidence="1" type="primary">hisS</name>
    <name type="ordered locus">LCABL_17430</name>
</gene>
<accession>B3WEM3</accession>
<proteinExistence type="inferred from homology"/>
<feature type="chain" id="PRO_1000095565" description="Histidine--tRNA ligase">
    <location>
        <begin position="1"/>
        <end position="427"/>
    </location>
</feature>
<keyword id="KW-0030">Aminoacyl-tRNA synthetase</keyword>
<keyword id="KW-0067">ATP-binding</keyword>
<keyword id="KW-0963">Cytoplasm</keyword>
<keyword id="KW-0436">Ligase</keyword>
<keyword id="KW-0547">Nucleotide-binding</keyword>
<keyword id="KW-0648">Protein biosynthesis</keyword>
<organism>
    <name type="scientific">Lacticaseibacillus casei (strain BL23)</name>
    <name type="common">Lactobacillus casei</name>
    <dbReference type="NCBI Taxonomy" id="543734"/>
    <lineage>
        <taxon>Bacteria</taxon>
        <taxon>Bacillati</taxon>
        <taxon>Bacillota</taxon>
        <taxon>Bacilli</taxon>
        <taxon>Lactobacillales</taxon>
        <taxon>Lactobacillaceae</taxon>
        <taxon>Lacticaseibacillus</taxon>
    </lineage>
</organism>
<evidence type="ECO:0000255" key="1">
    <source>
        <dbReference type="HAMAP-Rule" id="MF_00127"/>
    </source>
</evidence>
<protein>
    <recommendedName>
        <fullName evidence="1">Histidine--tRNA ligase</fullName>
        <ecNumber evidence="1">6.1.1.21</ecNumber>
    </recommendedName>
    <alternativeName>
        <fullName evidence="1">Histidyl-tRNA synthetase</fullName>
        <shortName evidence="1">HisRS</shortName>
    </alternativeName>
</protein>
<comment type="catalytic activity">
    <reaction evidence="1">
        <text>tRNA(His) + L-histidine + ATP = L-histidyl-tRNA(His) + AMP + diphosphate + H(+)</text>
        <dbReference type="Rhea" id="RHEA:17313"/>
        <dbReference type="Rhea" id="RHEA-COMP:9665"/>
        <dbReference type="Rhea" id="RHEA-COMP:9689"/>
        <dbReference type="ChEBI" id="CHEBI:15378"/>
        <dbReference type="ChEBI" id="CHEBI:30616"/>
        <dbReference type="ChEBI" id="CHEBI:33019"/>
        <dbReference type="ChEBI" id="CHEBI:57595"/>
        <dbReference type="ChEBI" id="CHEBI:78442"/>
        <dbReference type="ChEBI" id="CHEBI:78527"/>
        <dbReference type="ChEBI" id="CHEBI:456215"/>
        <dbReference type="EC" id="6.1.1.21"/>
    </reaction>
</comment>
<comment type="subunit">
    <text evidence="1">Homodimer.</text>
</comment>
<comment type="subcellular location">
    <subcellularLocation>
        <location evidence="1">Cytoplasm</location>
    </subcellularLocation>
</comment>
<comment type="similarity">
    <text evidence="1">Belongs to the class-II aminoacyl-tRNA synthetase family.</text>
</comment>
<reference key="1">
    <citation type="submission" date="2008-06" db="EMBL/GenBank/DDBJ databases">
        <title>Lactobacillus casei BL23 complete genome sequence.</title>
        <authorList>
            <person name="Maze A."/>
            <person name="Boel G."/>
            <person name="Bourand A."/>
            <person name="Loux V."/>
            <person name="Gibrat J.F."/>
            <person name="Zuniga M."/>
            <person name="Hartke A."/>
            <person name="Deutscher J."/>
        </authorList>
    </citation>
    <scope>NUCLEOTIDE SEQUENCE [LARGE SCALE GENOMIC DNA]</scope>
    <source>
        <strain>BL23</strain>
    </source>
</reference>
<dbReference type="EC" id="6.1.1.21" evidence="1"/>
<dbReference type="EMBL" id="FM177140">
    <property type="protein sequence ID" value="CAQ66824.1"/>
    <property type="molecule type" value="Genomic_DNA"/>
</dbReference>
<dbReference type="SMR" id="B3WEM3"/>
<dbReference type="KEGG" id="lcb:LCABL_17430"/>
<dbReference type="HOGENOM" id="CLU_025113_1_1_9"/>
<dbReference type="GO" id="GO:0005737">
    <property type="term" value="C:cytoplasm"/>
    <property type="evidence" value="ECO:0007669"/>
    <property type="project" value="UniProtKB-SubCell"/>
</dbReference>
<dbReference type="GO" id="GO:0005524">
    <property type="term" value="F:ATP binding"/>
    <property type="evidence" value="ECO:0007669"/>
    <property type="project" value="UniProtKB-UniRule"/>
</dbReference>
<dbReference type="GO" id="GO:0140096">
    <property type="term" value="F:catalytic activity, acting on a protein"/>
    <property type="evidence" value="ECO:0007669"/>
    <property type="project" value="UniProtKB-ARBA"/>
</dbReference>
<dbReference type="GO" id="GO:0004821">
    <property type="term" value="F:histidine-tRNA ligase activity"/>
    <property type="evidence" value="ECO:0007669"/>
    <property type="project" value="UniProtKB-UniRule"/>
</dbReference>
<dbReference type="GO" id="GO:0016740">
    <property type="term" value="F:transferase activity"/>
    <property type="evidence" value="ECO:0007669"/>
    <property type="project" value="UniProtKB-ARBA"/>
</dbReference>
<dbReference type="GO" id="GO:0006427">
    <property type="term" value="P:histidyl-tRNA aminoacylation"/>
    <property type="evidence" value="ECO:0007669"/>
    <property type="project" value="UniProtKB-UniRule"/>
</dbReference>
<dbReference type="CDD" id="cd00773">
    <property type="entry name" value="HisRS-like_core"/>
    <property type="match status" value="1"/>
</dbReference>
<dbReference type="CDD" id="cd00859">
    <property type="entry name" value="HisRS_anticodon"/>
    <property type="match status" value="1"/>
</dbReference>
<dbReference type="FunFam" id="3.30.930.10:FF:000005">
    <property type="entry name" value="Histidine--tRNA ligase"/>
    <property type="match status" value="1"/>
</dbReference>
<dbReference type="Gene3D" id="3.40.50.800">
    <property type="entry name" value="Anticodon-binding domain"/>
    <property type="match status" value="1"/>
</dbReference>
<dbReference type="Gene3D" id="3.30.930.10">
    <property type="entry name" value="Bira Bifunctional Protein, Domain 2"/>
    <property type="match status" value="1"/>
</dbReference>
<dbReference type="HAMAP" id="MF_00127">
    <property type="entry name" value="His_tRNA_synth"/>
    <property type="match status" value="1"/>
</dbReference>
<dbReference type="InterPro" id="IPR006195">
    <property type="entry name" value="aa-tRNA-synth_II"/>
</dbReference>
<dbReference type="InterPro" id="IPR045864">
    <property type="entry name" value="aa-tRNA-synth_II/BPL/LPL"/>
</dbReference>
<dbReference type="InterPro" id="IPR004154">
    <property type="entry name" value="Anticodon-bd"/>
</dbReference>
<dbReference type="InterPro" id="IPR036621">
    <property type="entry name" value="Anticodon-bd_dom_sf"/>
</dbReference>
<dbReference type="InterPro" id="IPR015807">
    <property type="entry name" value="His-tRNA-ligase"/>
</dbReference>
<dbReference type="InterPro" id="IPR041715">
    <property type="entry name" value="HisRS-like_core"/>
</dbReference>
<dbReference type="InterPro" id="IPR004516">
    <property type="entry name" value="HisRS/HisZ"/>
</dbReference>
<dbReference type="InterPro" id="IPR033656">
    <property type="entry name" value="HisRS_anticodon"/>
</dbReference>
<dbReference type="NCBIfam" id="TIGR00442">
    <property type="entry name" value="hisS"/>
    <property type="match status" value="1"/>
</dbReference>
<dbReference type="PANTHER" id="PTHR43707:SF1">
    <property type="entry name" value="HISTIDINE--TRNA LIGASE, MITOCHONDRIAL-RELATED"/>
    <property type="match status" value="1"/>
</dbReference>
<dbReference type="PANTHER" id="PTHR43707">
    <property type="entry name" value="HISTIDYL-TRNA SYNTHETASE"/>
    <property type="match status" value="1"/>
</dbReference>
<dbReference type="Pfam" id="PF03129">
    <property type="entry name" value="HGTP_anticodon"/>
    <property type="match status" value="1"/>
</dbReference>
<dbReference type="Pfam" id="PF13393">
    <property type="entry name" value="tRNA-synt_His"/>
    <property type="match status" value="1"/>
</dbReference>
<dbReference type="PIRSF" id="PIRSF001549">
    <property type="entry name" value="His-tRNA_synth"/>
    <property type="match status" value="1"/>
</dbReference>
<dbReference type="SUPFAM" id="SSF52954">
    <property type="entry name" value="Class II aaRS ABD-related"/>
    <property type="match status" value="1"/>
</dbReference>
<dbReference type="SUPFAM" id="SSF55681">
    <property type="entry name" value="Class II aaRS and biotin synthetases"/>
    <property type="match status" value="1"/>
</dbReference>
<dbReference type="PROSITE" id="PS50862">
    <property type="entry name" value="AA_TRNA_LIGASE_II"/>
    <property type="match status" value="1"/>
</dbReference>